<organism>
    <name type="scientific">Homo sapiens</name>
    <name type="common">Human</name>
    <dbReference type="NCBI Taxonomy" id="9606"/>
    <lineage>
        <taxon>Eukaryota</taxon>
        <taxon>Metazoa</taxon>
        <taxon>Chordata</taxon>
        <taxon>Craniata</taxon>
        <taxon>Vertebrata</taxon>
        <taxon>Euteleostomi</taxon>
        <taxon>Mammalia</taxon>
        <taxon>Eutheria</taxon>
        <taxon>Euarchontoglires</taxon>
        <taxon>Primates</taxon>
        <taxon>Haplorrhini</taxon>
        <taxon>Catarrhini</taxon>
        <taxon>Hominidae</taxon>
        <taxon>Homo</taxon>
    </lineage>
</organism>
<keyword id="KW-0002">3D-structure</keyword>
<keyword id="KW-0025">Alternative splicing</keyword>
<keyword id="KW-0967">Endosome</keyword>
<keyword id="KW-0325">Glycoprotein</keyword>
<keyword id="KW-0406">Ion transport</keyword>
<keyword id="KW-0408">Iron</keyword>
<keyword id="KW-0410">Iron transport</keyword>
<keyword id="KW-0458">Lysosome</keyword>
<keyword id="KW-0472">Membrane</keyword>
<keyword id="KW-1267">Proteomics identification</keyword>
<keyword id="KW-1185">Reference proteome</keyword>
<keyword id="KW-0812">Transmembrane</keyword>
<keyword id="KW-1133">Transmembrane helix</keyword>
<keyword id="KW-0813">Transport</keyword>
<feature type="chain" id="PRO_0000212588" description="Natural resistance-associated macrophage protein 1">
    <location>
        <begin position="1"/>
        <end position="550"/>
    </location>
</feature>
<feature type="topological domain" description="Cytoplasmic" evidence="1">
    <location>
        <begin position="1"/>
        <end position="58"/>
    </location>
</feature>
<feature type="transmembrane region" description="Helical" evidence="1">
    <location>
        <begin position="59"/>
        <end position="76"/>
    </location>
</feature>
<feature type="topological domain" description="Extracellular" evidence="1">
    <location>
        <begin position="77"/>
        <end position="85"/>
    </location>
</feature>
<feature type="transmembrane region" description="Helical" evidence="1">
    <location>
        <begin position="86"/>
        <end position="105"/>
    </location>
</feature>
<feature type="topological domain" description="Cytoplasmic" evidence="1">
    <location>
        <begin position="106"/>
        <end position="142"/>
    </location>
</feature>
<feature type="transmembrane region" description="Helical" evidence="1">
    <location>
        <begin position="143"/>
        <end position="163"/>
    </location>
</feature>
<feature type="topological domain" description="Extracellular" evidence="1">
    <location>
        <begin position="164"/>
        <end position="167"/>
    </location>
</feature>
<feature type="transmembrane region" description="Helical" evidence="1">
    <location>
        <begin position="168"/>
        <end position="187"/>
    </location>
</feature>
<feature type="topological domain" description="Cytoplasmic" evidence="1">
    <location>
        <begin position="188"/>
        <end position="196"/>
    </location>
</feature>
<feature type="transmembrane region" description="Helical" evidence="1">
    <location>
        <begin position="197"/>
        <end position="217"/>
    </location>
</feature>
<feature type="topological domain" description="Extracellular" evidence="1">
    <location>
        <begin position="218"/>
        <end position="240"/>
    </location>
</feature>
<feature type="transmembrane region" description="Helical" evidence="1">
    <location>
        <begin position="241"/>
        <end position="259"/>
    </location>
</feature>
<feature type="topological domain" description="Cytoplasmic" evidence="1">
    <location>
        <begin position="260"/>
        <end position="287"/>
    </location>
</feature>
<feature type="transmembrane region" description="Helical" evidence="1">
    <location>
        <begin position="288"/>
        <end position="307"/>
    </location>
</feature>
<feature type="topological domain" description="Extracellular" evidence="1">
    <location>
        <begin position="308"/>
        <end position="349"/>
    </location>
</feature>
<feature type="transmembrane region" description="Helical" evidence="1">
    <location>
        <begin position="350"/>
        <end position="369"/>
    </location>
</feature>
<feature type="topological domain" description="Cytoplasmic" evidence="1">
    <location>
        <begin position="370"/>
        <end position="400"/>
    </location>
</feature>
<feature type="transmembrane region" description="Helical" evidence="1">
    <location>
        <begin position="401"/>
        <end position="418"/>
    </location>
</feature>
<feature type="topological domain" description="Extracellular" evidence="1">
    <location>
        <begin position="419"/>
        <end position="429"/>
    </location>
</feature>
<feature type="transmembrane region" description="Helical" evidence="1">
    <location>
        <begin position="430"/>
        <end position="450"/>
    </location>
</feature>
<feature type="topological domain" description="Cytoplasmic" evidence="1">
    <location>
        <begin position="451"/>
        <end position="466"/>
    </location>
</feature>
<feature type="transmembrane region" description="Helical" evidence="1">
    <location>
        <begin position="467"/>
        <end position="488"/>
    </location>
</feature>
<feature type="topological domain" description="Extracellular" evidence="1">
    <location>
        <begin position="489"/>
        <end position="496"/>
    </location>
</feature>
<feature type="transmembrane region" description="Helical" evidence="1">
    <location>
        <begin position="497"/>
        <end position="516"/>
    </location>
</feature>
<feature type="topological domain" description="Cytoplasmic" evidence="1">
    <location>
        <begin position="517"/>
        <end position="550"/>
    </location>
</feature>
<feature type="region of interest" description="Disordered" evidence="2">
    <location>
        <begin position="1"/>
        <end position="45"/>
    </location>
</feature>
<feature type="compositionally biased region" description="Low complexity" evidence="2">
    <location>
        <begin position="11"/>
        <end position="23"/>
    </location>
</feature>
<feature type="glycosylation site" description="N-linked (GlcNAc...) asparagine" evidence="1">
    <location>
        <position position="324"/>
    </location>
</feature>
<feature type="glycosylation site" description="N-linked (GlcNAc...) asparagine" evidence="1">
    <location>
        <position position="338"/>
    </location>
</feature>
<feature type="splice variant" id="VSP_047875" description="In isoform 2." evidence="10">
    <original>MTGDKGPQRLSGS</original>
    <variation>MVRCQLTATSTSQ</variation>
    <location>
        <begin position="1"/>
        <end position="13"/>
    </location>
</feature>
<feature type="splice variant" id="VSP_047876" description="In isoform 2." evidence="10">
    <location>
        <begin position="14"/>
        <end position="131"/>
    </location>
</feature>
<feature type="sequence variant" id="VAR_004629" description="In dbSNP:rs751872662.">
    <original>Q</original>
    <variation>R</variation>
    <location>
        <position position="30"/>
    </location>
</feature>
<feature type="sequence variant" id="VAR_004630" description="In dbSNP:rs201565523." evidence="6">
    <original>A</original>
    <variation>V</variation>
    <location>
        <position position="318"/>
    </location>
</feature>
<feature type="sequence variant" id="VAR_004631" description="Risk factor for infection with Mycobacterium ulcerans; dbSNP:rs17235409." evidence="6">
    <original>D</original>
    <variation>N</variation>
    <location>
        <position position="543"/>
    </location>
</feature>
<feature type="sequence conflict" description="In Ref. 8; CAA57541." evidence="11" ref="8">
    <original>S</original>
    <variation>R</variation>
    <location>
        <position position="54"/>
    </location>
</feature>
<feature type="sequence conflict" description="In Ref. 8." evidence="11" ref="8">
    <original>A</original>
    <variation>L</variation>
    <location>
        <position position="84"/>
    </location>
</feature>
<feature type="sequence conflict" description="In Ref. 8." evidence="11" ref="8">
    <original>A</original>
    <variation>P</variation>
    <location>
        <position position="86"/>
    </location>
</feature>
<feature type="sequence conflict" description="In Ref. 8; CAA57541." evidence="11" ref="8">
    <original>A</original>
    <variation>V</variation>
    <location>
        <position position="275"/>
    </location>
</feature>
<feature type="sequence conflict" description="In Ref. 8; CAA57541." evidence="11" ref="8">
    <original>V</original>
    <variation>A</variation>
    <location>
        <position position="305"/>
    </location>
</feature>
<feature type="sequence conflict" description="In Ref. 8; CAA57541." evidence="11" ref="8">
    <original>N</original>
    <variation>K</variation>
    <location>
        <position position="315"/>
    </location>
</feature>
<feature type="sequence conflict" description="In Ref. 8; CAA57541." evidence="11" ref="8">
    <original>R</original>
    <variation>S</variation>
    <location>
        <position position="397"/>
    </location>
</feature>
<feature type="sequence conflict" description="In Ref. 8; CAA57541." evidence="11" ref="8">
    <original>F</original>
    <variation>V</variation>
    <location>
        <position position="441"/>
    </location>
</feature>
<feature type="sequence conflict" description="In Ref. 8; CAA57541." evidence="11" ref="8">
    <original>A</original>
    <variation>T</variation>
    <location>
        <position position="478"/>
    </location>
</feature>
<feature type="sequence conflict" description="In Ref. 8; CAA57541." evidence="11" ref="8">
    <original>Q</original>
    <variation>H</variation>
    <location>
        <position position="544"/>
    </location>
</feature>
<reference key="1">
    <citation type="journal article" date="1994" name="J. Exp. Med.">
        <title>Human natural resistance-associated macrophage protein: cDNA cloning, chromosomal mapping, genomic organization, and tissue-specific expression.</title>
        <authorList>
            <person name="Cellier M."/>
            <person name="Govoni G."/>
            <person name="Vidal S."/>
            <person name="Kwan T."/>
            <person name="Groulx N."/>
            <person name="Liu J."/>
            <person name="Sanchez F."/>
            <person name="Skamene E."/>
            <person name="Schurr E."/>
            <person name="Gros P."/>
        </authorList>
    </citation>
    <scope>NUCLEOTIDE SEQUENCE [GENOMIC DNA / MRNA] (ISOFORM 1)</scope>
    <scope>TISSUE SPECIFICITY</scope>
    <source>
        <tissue>Spleen</tissue>
    </source>
</reference>
<reference key="2">
    <citation type="journal article" date="1995" name="Immunol. Lett.">
        <title>Identification of natural resistance-associated macrophage protein in peripheral blood lymphocytes.</title>
        <authorList>
            <person name="Kishi F."/>
            <person name="Nobumoto M."/>
        </authorList>
    </citation>
    <scope>NUCLEOTIDE SEQUENCE [MRNA] (ISOFORM 1)</scope>
    <scope>TISSUE SPECIFICITY</scope>
    <source>
        <tissue>Spleen</tissue>
    </source>
</reference>
<reference key="3">
    <citation type="journal article" date="2000" name="Mamm. Genome">
        <title>Complete nucleotide sequence and genomic structure of the human NRAMP1 gene region on chromosome region 2q35.</title>
        <authorList>
            <person name="Marquet S."/>
            <person name="Lepage P."/>
            <person name="Hudson T.J."/>
            <person name="Musser J.M."/>
            <person name="Schurr E."/>
        </authorList>
    </citation>
    <scope>NUCLEOTIDE SEQUENCE [GENOMIC DNA]</scope>
</reference>
<reference key="4">
    <citation type="journal article" date="2005" name="Nature">
        <title>Generation and annotation of the DNA sequences of human chromosomes 2 and 4.</title>
        <authorList>
            <person name="Hillier L.W."/>
            <person name="Graves T.A."/>
            <person name="Fulton R.S."/>
            <person name="Fulton L.A."/>
            <person name="Pepin K.H."/>
            <person name="Minx P."/>
            <person name="Wagner-McPherson C."/>
            <person name="Layman D."/>
            <person name="Wylie K."/>
            <person name="Sekhon M."/>
            <person name="Becker M.C."/>
            <person name="Fewell G.A."/>
            <person name="Delehaunty K.D."/>
            <person name="Miner T.L."/>
            <person name="Nash W.E."/>
            <person name="Kremitzki C."/>
            <person name="Oddy L."/>
            <person name="Du H."/>
            <person name="Sun H."/>
            <person name="Bradshaw-Cordum H."/>
            <person name="Ali J."/>
            <person name="Carter J."/>
            <person name="Cordes M."/>
            <person name="Harris A."/>
            <person name="Isak A."/>
            <person name="van Brunt A."/>
            <person name="Nguyen C."/>
            <person name="Du F."/>
            <person name="Courtney L."/>
            <person name="Kalicki J."/>
            <person name="Ozersky P."/>
            <person name="Abbott S."/>
            <person name="Armstrong J."/>
            <person name="Belter E.A."/>
            <person name="Caruso L."/>
            <person name="Cedroni M."/>
            <person name="Cotton M."/>
            <person name="Davidson T."/>
            <person name="Desai A."/>
            <person name="Elliott G."/>
            <person name="Erb T."/>
            <person name="Fronick C."/>
            <person name="Gaige T."/>
            <person name="Haakenson W."/>
            <person name="Haglund K."/>
            <person name="Holmes A."/>
            <person name="Harkins R."/>
            <person name="Kim K."/>
            <person name="Kruchowski S.S."/>
            <person name="Strong C.M."/>
            <person name="Grewal N."/>
            <person name="Goyea E."/>
            <person name="Hou S."/>
            <person name="Levy A."/>
            <person name="Martinka S."/>
            <person name="Mead K."/>
            <person name="McLellan M.D."/>
            <person name="Meyer R."/>
            <person name="Randall-Maher J."/>
            <person name="Tomlinson C."/>
            <person name="Dauphin-Kohlberg S."/>
            <person name="Kozlowicz-Reilly A."/>
            <person name="Shah N."/>
            <person name="Swearengen-Shahid S."/>
            <person name="Snider J."/>
            <person name="Strong J.T."/>
            <person name="Thompson J."/>
            <person name="Yoakum M."/>
            <person name="Leonard S."/>
            <person name="Pearman C."/>
            <person name="Trani L."/>
            <person name="Radionenko M."/>
            <person name="Waligorski J.E."/>
            <person name="Wang C."/>
            <person name="Rock S.M."/>
            <person name="Tin-Wollam A.-M."/>
            <person name="Maupin R."/>
            <person name="Latreille P."/>
            <person name="Wendl M.C."/>
            <person name="Yang S.-P."/>
            <person name="Pohl C."/>
            <person name="Wallis J.W."/>
            <person name="Spieth J."/>
            <person name="Bieri T.A."/>
            <person name="Berkowicz N."/>
            <person name="Nelson J.O."/>
            <person name="Osborne J."/>
            <person name="Ding L."/>
            <person name="Meyer R."/>
            <person name="Sabo A."/>
            <person name="Shotland Y."/>
            <person name="Sinha P."/>
            <person name="Wohldmann P.E."/>
            <person name="Cook L.L."/>
            <person name="Hickenbotham M.T."/>
            <person name="Eldred J."/>
            <person name="Williams D."/>
            <person name="Jones T.A."/>
            <person name="She X."/>
            <person name="Ciccarelli F.D."/>
            <person name="Izaurralde E."/>
            <person name="Taylor J."/>
            <person name="Schmutz J."/>
            <person name="Myers R.M."/>
            <person name="Cox D.R."/>
            <person name="Huang X."/>
            <person name="McPherson J.D."/>
            <person name="Mardis E.R."/>
            <person name="Clifton S.W."/>
            <person name="Warren W.C."/>
            <person name="Chinwalla A.T."/>
            <person name="Eddy S.R."/>
            <person name="Marra M.A."/>
            <person name="Ovcharenko I."/>
            <person name="Furey T.S."/>
            <person name="Miller W."/>
            <person name="Eichler E.E."/>
            <person name="Bork P."/>
            <person name="Suyama M."/>
            <person name="Torrents D."/>
            <person name="Waterston R.H."/>
            <person name="Wilson R.K."/>
        </authorList>
    </citation>
    <scope>NUCLEOTIDE SEQUENCE [LARGE SCALE GENOMIC DNA]</scope>
</reference>
<reference key="5">
    <citation type="submission" date="2005-07" db="EMBL/GenBank/DDBJ databases">
        <authorList>
            <person name="Mural R.J."/>
            <person name="Istrail S."/>
            <person name="Sutton G."/>
            <person name="Florea L."/>
            <person name="Halpern A.L."/>
            <person name="Mobarry C.M."/>
            <person name="Lippert R."/>
            <person name="Walenz B."/>
            <person name="Shatkay H."/>
            <person name="Dew I."/>
            <person name="Miller J.R."/>
            <person name="Flanigan M.J."/>
            <person name="Edwards N.J."/>
            <person name="Bolanos R."/>
            <person name="Fasulo D."/>
            <person name="Halldorsson B.V."/>
            <person name="Hannenhalli S."/>
            <person name="Turner R."/>
            <person name="Yooseph S."/>
            <person name="Lu F."/>
            <person name="Nusskern D.R."/>
            <person name="Shue B.C."/>
            <person name="Zheng X.H."/>
            <person name="Zhong F."/>
            <person name="Delcher A.L."/>
            <person name="Huson D.H."/>
            <person name="Kravitz S.A."/>
            <person name="Mouchard L."/>
            <person name="Reinert K."/>
            <person name="Remington K.A."/>
            <person name="Clark A.G."/>
            <person name="Waterman M.S."/>
            <person name="Eichler E.E."/>
            <person name="Adams M.D."/>
            <person name="Hunkapiller M.W."/>
            <person name="Myers E.W."/>
            <person name="Venter J.C."/>
        </authorList>
    </citation>
    <scope>NUCLEOTIDE SEQUENCE [LARGE SCALE GENOMIC DNA]</scope>
</reference>
<reference key="6">
    <citation type="journal article" date="2004" name="Genome Res.">
        <title>The status, quality, and expansion of the NIH full-length cDNA project: the Mammalian Gene Collection (MGC).</title>
        <authorList>
            <consortium name="The MGC Project Team"/>
        </authorList>
    </citation>
    <scope>NUCLEOTIDE SEQUENCE [LARGE SCALE MRNA] (ISOFORM 2)</scope>
    <source>
        <tissue>Blood</tissue>
    </source>
</reference>
<reference key="7">
    <citation type="journal article" date="1994" name="Biochem. Biophys. Res. Commun.">
        <title>Isolation and characterization of human Nramp cDNA.</title>
        <authorList>
            <person name="Kishi F."/>
        </authorList>
    </citation>
    <scope>NUCLEOTIDE SEQUENCE [MRNA] OF 68-550 (ISOFORM 1)</scope>
</reference>
<reference key="8">
    <citation type="journal article" date="1995" name="Mol. Med.">
        <title>Genomic organization and sequence of the human NRAMP gene: identification and mapping of a promoter region polymorphism.</title>
        <authorList>
            <person name="Blackwell J.M."/>
            <person name="Barton C.H."/>
            <person name="White J.K."/>
            <person name="Searle S."/>
            <person name="Baker A.-M."/>
            <person name="Williams H."/>
            <person name="Shaw M.-A."/>
        </authorList>
    </citation>
    <scope>NUCLEOTIDE SEQUENCE [GENOMIC DNA]</scope>
</reference>
<reference key="9">
    <citation type="journal article" date="2001" name="Biochem. J.">
        <title>Natural-resistance-associated macrophage protein 1 is an H+/bivalent cation antiporter.</title>
        <authorList>
            <person name="Goswami T."/>
            <person name="Bhattacharjee A."/>
            <person name="Babal P."/>
            <person name="Searle S."/>
            <person name="Moore E."/>
            <person name="Li M."/>
            <person name="Blackwell J.M."/>
        </authorList>
    </citation>
    <scope>FUNCTION</scope>
    <scope>TRANSPORTER ACTIVITY</scope>
    <scope>SUBCELLULAR LOCATION</scope>
</reference>
<reference key="10">
    <citation type="journal article" date="1995" name="Am. J. Hum. Genet.">
        <title>Identification of polymorphisms and sequence variants in the human homologue of the mouse natural resistance-associated macrophage protein gene.</title>
        <authorList>
            <person name="Liu J."/>
            <person name="Fujiwara T.M."/>
            <person name="Buu N.T."/>
            <person name="Sanchez F.O."/>
            <person name="Cellier M."/>
            <person name="Paradis A.J."/>
            <person name="Frappier D."/>
            <person name="Skamene E."/>
            <person name="Gros P."/>
            <person name="Morgan K."/>
            <person name="Schurr E."/>
        </authorList>
    </citation>
    <scope>VARIANTS VAL-318 AND ASN-543</scope>
</reference>
<reference key="11">
    <citation type="journal article" date="2005" name="Proc. Natl. Acad. Sci. U.S.A.">
        <title>Alleles of the NRAMP1 gene are risk factors for pediatric tuberculosis disease.</title>
        <authorList>
            <person name="Malik S."/>
            <person name="Abel L."/>
            <person name="Tooker H."/>
            <person name="Poon A."/>
            <person name="Simkin L."/>
            <person name="Girard M."/>
            <person name="Adams G.J."/>
            <person name="Starke J.R."/>
            <person name="Smith K.C."/>
            <person name="Graviss E.A."/>
            <person name="Musser J.M."/>
            <person name="Schurr E."/>
        </authorList>
    </citation>
    <scope>INVOLVEMENT IN MYCOBACTERIUM TUBERCULOSIS SUSCEPTIBILITY</scope>
</reference>
<reference key="12">
    <citation type="journal article" date="2006" name="Genes Immun.">
        <title>Susceptibility to Buruli ulcer is associated with the SLC11A1 (NRAMP1) D543N polymorphism.</title>
        <authorList>
            <person name="Stienstra Y."/>
            <person name="van der Werf T.S."/>
            <person name="Oosterom E."/>
            <person name="Nolte I.M."/>
            <person name="van der Graaf W.T.A."/>
            <person name="Etuaful S."/>
            <person name="Raghunathan P.L."/>
            <person name="Whitney E.A.S."/>
            <person name="Ampadu E.O."/>
            <person name="Asamoa K."/>
            <person name="Klutse E.Y."/>
            <person name="te Meerman G.J."/>
            <person name="Tappero J.W."/>
            <person name="Ashford D.A."/>
            <person name="van der Steege G."/>
        </authorList>
    </citation>
    <scope>ASSOCIATION OF VARIANT ASN-543 WITH SUSCEPTIBILITY TO INFECTION WITH MYCOBACTERIUM ULCERANS</scope>
</reference>
<protein>
    <recommendedName>
        <fullName evidence="11">Natural resistance-associated macrophage protein 1</fullName>
        <shortName evidence="9">NRAMP 1</shortName>
    </recommendedName>
    <alternativeName>
        <fullName>Solute carrier family 11 member 1</fullName>
    </alternativeName>
</protein>
<dbReference type="EMBL" id="L32185">
    <property type="protein sequence ID" value="AAA57521.1"/>
    <property type="molecule type" value="mRNA"/>
</dbReference>
<dbReference type="EMBL" id="L38593">
    <property type="protein sequence ID" value="AAA57557.1"/>
    <property type="molecule type" value="Genomic_DNA"/>
</dbReference>
<dbReference type="EMBL" id="L38592">
    <property type="protein sequence ID" value="AAA57557.1"/>
    <property type="status" value="JOINED"/>
    <property type="molecule type" value="Genomic_DNA"/>
</dbReference>
<dbReference type="EMBL" id="AF229163">
    <property type="protein sequence ID" value="AAG15405.1"/>
    <property type="molecule type" value="Genomic_DNA"/>
</dbReference>
<dbReference type="EMBL" id="AC021016">
    <property type="status" value="NOT_ANNOTATED_CDS"/>
    <property type="molecule type" value="Genomic_DNA"/>
</dbReference>
<dbReference type="EMBL" id="CH471063">
    <property type="protein sequence ID" value="EAW70611.1"/>
    <property type="molecule type" value="Genomic_DNA"/>
</dbReference>
<dbReference type="EMBL" id="BC071165">
    <property type="protein sequence ID" value="AAH71165.1"/>
    <property type="molecule type" value="mRNA"/>
</dbReference>
<dbReference type="EMBL" id="D50402">
    <property type="protein sequence ID" value="BAA08907.1"/>
    <property type="molecule type" value="mRNA"/>
</dbReference>
<dbReference type="EMBL" id="D50403">
    <property type="protein sequence ID" value="BAA08908.1"/>
    <property type="molecule type" value="mRNA"/>
</dbReference>
<dbReference type="EMBL" id="D38171">
    <property type="protein sequence ID" value="BAA07370.1"/>
    <property type="molecule type" value="mRNA"/>
</dbReference>
<dbReference type="EMBL" id="X82015">
    <property type="protein sequence ID" value="CAA57541.1"/>
    <property type="molecule type" value="Genomic_DNA"/>
</dbReference>
<dbReference type="CCDS" id="CCDS2415.1">
    <molecule id="P49279-1"/>
</dbReference>
<dbReference type="PIR" id="I55679">
    <property type="entry name" value="I55679"/>
</dbReference>
<dbReference type="PIR" id="JC4095">
    <property type="entry name" value="JC4095"/>
</dbReference>
<dbReference type="RefSeq" id="NP_000569.3">
    <molecule id="P49279-1"/>
    <property type="nucleotide sequence ID" value="NM_000578.3"/>
</dbReference>
<dbReference type="RefSeq" id="XP_005246850.1">
    <property type="nucleotide sequence ID" value="XM_005246793.3"/>
</dbReference>
<dbReference type="RefSeq" id="XP_005246851.1">
    <property type="nucleotide sequence ID" value="XM_005246794.3"/>
</dbReference>
<dbReference type="RefSeq" id="XP_006712772.1">
    <property type="nucleotide sequence ID" value="XM_006712709.3"/>
</dbReference>
<dbReference type="RefSeq" id="XP_006712773.1">
    <property type="nucleotide sequence ID" value="XM_006712710.3"/>
</dbReference>
<dbReference type="RefSeq" id="XP_016860255.1">
    <property type="nucleotide sequence ID" value="XM_017004766.1"/>
</dbReference>
<dbReference type="RefSeq" id="XP_047301529.1">
    <molecule id="P49279-2"/>
    <property type="nucleotide sequence ID" value="XM_047445573.1"/>
</dbReference>
<dbReference type="RefSeq" id="XP_054199477.1">
    <molecule id="P49279-2"/>
    <property type="nucleotide sequence ID" value="XM_054343502.1"/>
</dbReference>
<dbReference type="PDB" id="9F6P">
    <property type="method" value="EM"/>
    <property type="resolution" value="3.70 A"/>
    <property type="chains" value="A=2-550"/>
</dbReference>
<dbReference type="PDB" id="9F6Q">
    <property type="method" value="EM"/>
    <property type="resolution" value="3.90 A"/>
    <property type="chains" value="A=2-550"/>
</dbReference>
<dbReference type="PDBsum" id="9F6P"/>
<dbReference type="PDBsum" id="9F6Q"/>
<dbReference type="EMDB" id="EMD-50237"/>
<dbReference type="EMDB" id="EMD-50238"/>
<dbReference type="SMR" id="P49279"/>
<dbReference type="FunCoup" id="P49279">
    <property type="interactions" value="758"/>
</dbReference>
<dbReference type="STRING" id="9606.ENSP00000233202"/>
<dbReference type="BindingDB" id="P49279"/>
<dbReference type="ChEMBL" id="CHEMBL2052040"/>
<dbReference type="TCDB" id="2.A.55.2.3">
    <property type="family name" value="the metal ion (mn(2+)-iron) transporter (nramp) family"/>
</dbReference>
<dbReference type="GlyCosmos" id="P49279">
    <property type="glycosylation" value="2 sites, No reported glycans"/>
</dbReference>
<dbReference type="GlyGen" id="P49279">
    <property type="glycosylation" value="2 sites"/>
</dbReference>
<dbReference type="iPTMnet" id="P49279"/>
<dbReference type="PhosphoSitePlus" id="P49279"/>
<dbReference type="BioMuta" id="SLC11A1"/>
<dbReference type="DMDM" id="1352521"/>
<dbReference type="MassIVE" id="P49279"/>
<dbReference type="PaxDb" id="9606-ENSP00000233202"/>
<dbReference type="PeptideAtlas" id="P49279"/>
<dbReference type="ProteomicsDB" id="55978">
    <molecule id="P49279-1"/>
</dbReference>
<dbReference type="ProteomicsDB" id="7572"/>
<dbReference type="Antibodypedia" id="3997">
    <property type="antibodies" value="191 antibodies from 26 providers"/>
</dbReference>
<dbReference type="DNASU" id="6556"/>
<dbReference type="Ensembl" id="ENST00000233202.11">
    <molecule id="P49279-1"/>
    <property type="protein sequence ID" value="ENSP00000233202.6"/>
    <property type="gene ID" value="ENSG00000018280.18"/>
</dbReference>
<dbReference type="GeneID" id="6556"/>
<dbReference type="KEGG" id="hsa:6556"/>
<dbReference type="MANE-Select" id="ENST00000233202.11">
    <property type="protein sequence ID" value="ENSP00000233202.6"/>
    <property type="RefSeq nucleotide sequence ID" value="NM_000578.4"/>
    <property type="RefSeq protein sequence ID" value="NP_000569.3"/>
</dbReference>
<dbReference type="UCSC" id="uc002vhv.3">
    <molecule id="P49279-1"/>
    <property type="organism name" value="human"/>
</dbReference>
<dbReference type="AGR" id="HGNC:10907"/>
<dbReference type="CTD" id="6556"/>
<dbReference type="DisGeNET" id="6556"/>
<dbReference type="GeneCards" id="SLC11A1"/>
<dbReference type="HGNC" id="HGNC:10907">
    <property type="gene designation" value="SLC11A1"/>
</dbReference>
<dbReference type="HPA" id="ENSG00000018280">
    <property type="expression patterns" value="Tissue enhanced (choroid plexus, lung, lymphoid tissue)"/>
</dbReference>
<dbReference type="MalaCards" id="SLC11A1"/>
<dbReference type="MIM" id="600266">
    <property type="type" value="gene"/>
</dbReference>
<dbReference type="MIM" id="607948">
    <property type="type" value="phenotype"/>
</dbReference>
<dbReference type="MIM" id="610446">
    <property type="type" value="phenotype"/>
</dbReference>
<dbReference type="neXtProt" id="NX_P49279"/>
<dbReference type="OpenTargets" id="ENSG00000018280"/>
<dbReference type="Orphanet" id="586">
    <property type="disease" value="Cystic fibrosis"/>
</dbReference>
<dbReference type="Orphanet" id="3389">
    <property type="disease" value="Tuberculosis"/>
</dbReference>
<dbReference type="PharmGKB" id="PA319"/>
<dbReference type="VEuPathDB" id="HostDB:ENSG00000018280"/>
<dbReference type="eggNOG" id="KOG1291">
    <property type="taxonomic scope" value="Eukaryota"/>
</dbReference>
<dbReference type="GeneTree" id="ENSGT00940000160799"/>
<dbReference type="HOGENOM" id="CLU_020088_5_2_1"/>
<dbReference type="InParanoid" id="P49279"/>
<dbReference type="OMA" id="STYLVWT"/>
<dbReference type="OrthoDB" id="409173at2759"/>
<dbReference type="PAN-GO" id="P49279">
    <property type="GO annotations" value="9 GO annotations based on evolutionary models"/>
</dbReference>
<dbReference type="PhylomeDB" id="P49279"/>
<dbReference type="TreeFam" id="TF315185"/>
<dbReference type="PathwayCommons" id="P49279"/>
<dbReference type="Reactome" id="R-HSA-1222556">
    <property type="pathway name" value="ROS and RNS production in phagocytes"/>
</dbReference>
<dbReference type="Reactome" id="R-HSA-425410">
    <property type="pathway name" value="Metal ion SLC transporters"/>
</dbReference>
<dbReference type="Reactome" id="R-HSA-6798695">
    <property type="pathway name" value="Neutrophil degranulation"/>
</dbReference>
<dbReference type="Reactome" id="R-HSA-6803544">
    <property type="pathway name" value="Ion influx/efflux at host-pathogen interface"/>
</dbReference>
<dbReference type="SignaLink" id="P49279"/>
<dbReference type="SIGNOR" id="P49279"/>
<dbReference type="BioGRID-ORCS" id="6556">
    <property type="hits" value="10 hits in 1147 CRISPR screens"/>
</dbReference>
<dbReference type="ChiTaRS" id="SLC11A1">
    <property type="organism name" value="human"/>
</dbReference>
<dbReference type="GeneWiki" id="SLC11A1"/>
<dbReference type="GenomeRNAi" id="6556"/>
<dbReference type="Pharos" id="P49279">
    <property type="development level" value="Tbio"/>
</dbReference>
<dbReference type="PRO" id="PR:P49279"/>
<dbReference type="Proteomes" id="UP000005640">
    <property type="component" value="Chromosome 2"/>
</dbReference>
<dbReference type="RNAct" id="P49279">
    <property type="molecule type" value="protein"/>
</dbReference>
<dbReference type="Bgee" id="ENSG00000018280">
    <property type="expression patterns" value="Expressed in right lung and 136 other cell types or tissues"/>
</dbReference>
<dbReference type="ExpressionAtlas" id="P49279">
    <property type="expression patterns" value="baseline and differential"/>
</dbReference>
<dbReference type="GO" id="GO:0010008">
    <property type="term" value="C:endosome membrane"/>
    <property type="evidence" value="ECO:0000318"/>
    <property type="project" value="GO_Central"/>
</dbReference>
<dbReference type="GO" id="GO:0101003">
    <property type="term" value="C:ficolin-1-rich granule membrane"/>
    <property type="evidence" value="ECO:0000304"/>
    <property type="project" value="Reactome"/>
</dbReference>
<dbReference type="GO" id="GO:0005770">
    <property type="term" value="C:late endosome"/>
    <property type="evidence" value="ECO:0000250"/>
    <property type="project" value="BHF-UCL"/>
</dbReference>
<dbReference type="GO" id="GO:0031902">
    <property type="term" value="C:late endosome membrane"/>
    <property type="evidence" value="ECO:0000250"/>
    <property type="project" value="UniProtKB"/>
</dbReference>
<dbReference type="GO" id="GO:0005765">
    <property type="term" value="C:lysosomal membrane"/>
    <property type="evidence" value="ECO:0000250"/>
    <property type="project" value="UniProtKB"/>
</dbReference>
<dbReference type="GO" id="GO:0005764">
    <property type="term" value="C:lysosome"/>
    <property type="evidence" value="ECO:0000250"/>
    <property type="project" value="BHF-UCL"/>
</dbReference>
<dbReference type="GO" id="GO:0030670">
    <property type="term" value="C:phagocytic vesicle membrane"/>
    <property type="evidence" value="ECO:0000314"/>
    <property type="project" value="BHF-UCL"/>
</dbReference>
<dbReference type="GO" id="GO:0005886">
    <property type="term" value="C:plasma membrane"/>
    <property type="evidence" value="ECO:0000315"/>
    <property type="project" value="BHF-UCL"/>
</dbReference>
<dbReference type="GO" id="GO:0070821">
    <property type="term" value="C:tertiary granule membrane"/>
    <property type="evidence" value="ECO:0000314"/>
    <property type="project" value="BHF-UCL"/>
</dbReference>
<dbReference type="GO" id="GO:0015086">
    <property type="term" value="F:cadmium ion transmembrane transporter activity"/>
    <property type="evidence" value="ECO:0000318"/>
    <property type="project" value="GO_Central"/>
</dbReference>
<dbReference type="GO" id="GO:0005381">
    <property type="term" value="F:iron ion transmembrane transporter activity"/>
    <property type="evidence" value="ECO:0000314"/>
    <property type="project" value="UniProtKB"/>
</dbReference>
<dbReference type="GO" id="GO:0005384">
    <property type="term" value="F:manganese ion transmembrane transporter activity"/>
    <property type="evidence" value="ECO:0000314"/>
    <property type="project" value="UniProtKB"/>
</dbReference>
<dbReference type="GO" id="GO:0051139">
    <property type="term" value="F:metal cation:proton antiporter activity"/>
    <property type="evidence" value="ECO:0000314"/>
    <property type="project" value="UniProtKB"/>
</dbReference>
<dbReference type="GO" id="GO:0042803">
    <property type="term" value="F:protein homodimerization activity"/>
    <property type="evidence" value="ECO:0000314"/>
    <property type="project" value="UniProtKB"/>
</dbReference>
<dbReference type="GO" id="GO:0046915">
    <property type="term" value="F:transition metal ion transmembrane transporter activity"/>
    <property type="evidence" value="ECO:0000316"/>
    <property type="project" value="BHF-UCL"/>
</dbReference>
<dbReference type="GO" id="GO:0048002">
    <property type="term" value="P:antigen processing and presentation of peptide antigen"/>
    <property type="evidence" value="ECO:0000250"/>
    <property type="project" value="BHF-UCL"/>
</dbReference>
<dbReference type="GO" id="GO:0019730">
    <property type="term" value="P:antimicrobial humoral response"/>
    <property type="evidence" value="ECO:0000304"/>
    <property type="project" value="Reactome"/>
</dbReference>
<dbReference type="GO" id="GO:0070574">
    <property type="term" value="P:cadmium ion transmembrane transport"/>
    <property type="evidence" value="ECO:0000316"/>
    <property type="project" value="BHF-UCL"/>
</dbReference>
<dbReference type="GO" id="GO:0045454">
    <property type="term" value="P:cell redox homeostasis"/>
    <property type="evidence" value="ECO:0000304"/>
    <property type="project" value="Reactome"/>
</dbReference>
<dbReference type="GO" id="GO:0098849">
    <property type="term" value="P:cellular detoxification of cadmium ion"/>
    <property type="evidence" value="ECO:0000316"/>
    <property type="project" value="BHF-UCL"/>
</dbReference>
<dbReference type="GO" id="GO:0042742">
    <property type="term" value="P:defense response to bacterium"/>
    <property type="evidence" value="ECO:0000250"/>
    <property type="project" value="BHF-UCL"/>
</dbReference>
<dbReference type="GO" id="GO:0050829">
    <property type="term" value="P:defense response to Gram-negative bacterium"/>
    <property type="evidence" value="ECO:0000250"/>
    <property type="project" value="BHF-UCL"/>
</dbReference>
<dbReference type="GO" id="GO:0042832">
    <property type="term" value="P:defense response to protozoan"/>
    <property type="evidence" value="ECO:0000250"/>
    <property type="project" value="BHF-UCL"/>
</dbReference>
<dbReference type="GO" id="GO:0051649">
    <property type="term" value="P:establishment of localization in cell"/>
    <property type="evidence" value="ECO:0007669"/>
    <property type="project" value="Ensembl"/>
</dbReference>
<dbReference type="GO" id="GO:0006954">
    <property type="term" value="P:inflammatory response"/>
    <property type="evidence" value="ECO:0000250"/>
    <property type="project" value="BHF-UCL"/>
</dbReference>
<dbReference type="GO" id="GO:0006879">
    <property type="term" value="P:intracellular iron ion homeostasis"/>
    <property type="evidence" value="ECO:0000315"/>
    <property type="project" value="BHF-UCL"/>
</dbReference>
<dbReference type="GO" id="GO:0034755">
    <property type="term" value="P:iron ion transmembrane transport"/>
    <property type="evidence" value="ECO:0000318"/>
    <property type="project" value="GO_Central"/>
</dbReference>
<dbReference type="GO" id="GO:0006826">
    <property type="term" value="P:iron ion transport"/>
    <property type="evidence" value="ECO:0000314"/>
    <property type="project" value="UniProtKB"/>
</dbReference>
<dbReference type="GO" id="GO:1903826">
    <property type="term" value="P:L-arginine transmembrane transport"/>
    <property type="evidence" value="ECO:0007669"/>
    <property type="project" value="Ensembl"/>
</dbReference>
<dbReference type="GO" id="GO:0042116">
    <property type="term" value="P:macrophage activation"/>
    <property type="evidence" value="ECO:0000250"/>
    <property type="project" value="BHF-UCL"/>
</dbReference>
<dbReference type="GO" id="GO:0006828">
    <property type="term" value="P:manganese ion transport"/>
    <property type="evidence" value="ECO:0000314"/>
    <property type="project" value="UniProtKB"/>
</dbReference>
<dbReference type="GO" id="GO:0030001">
    <property type="term" value="P:metal ion transport"/>
    <property type="evidence" value="ECO:0000250"/>
    <property type="project" value="BHF-UCL"/>
</dbReference>
<dbReference type="GO" id="GO:0045342">
    <property type="term" value="P:MHC class II biosynthetic process"/>
    <property type="evidence" value="ECO:0000250"/>
    <property type="project" value="BHF-UCL"/>
</dbReference>
<dbReference type="GO" id="GO:0048255">
    <property type="term" value="P:mRNA stabilization"/>
    <property type="evidence" value="ECO:0000250"/>
    <property type="project" value="BHF-UCL"/>
</dbReference>
<dbReference type="GO" id="GO:0060586">
    <property type="term" value="P:multicellular organismal-level iron ion homeostasis"/>
    <property type="evidence" value="ECO:0000250"/>
    <property type="project" value="BHF-UCL"/>
</dbReference>
<dbReference type="GO" id="GO:0001818">
    <property type="term" value="P:negative regulation of cytokine production"/>
    <property type="evidence" value="ECO:0000250"/>
    <property type="project" value="BHF-UCL"/>
</dbReference>
<dbReference type="GO" id="GO:0015707">
    <property type="term" value="P:nitrite transport"/>
    <property type="evidence" value="ECO:0000250"/>
    <property type="project" value="BHF-UCL"/>
</dbReference>
<dbReference type="GO" id="GO:0006909">
    <property type="term" value="P:phagocytosis"/>
    <property type="evidence" value="ECO:0000250"/>
    <property type="project" value="BHF-UCL"/>
</dbReference>
<dbReference type="GO" id="GO:0001819">
    <property type="term" value="P:positive regulation of cytokine production"/>
    <property type="evidence" value="ECO:0000250"/>
    <property type="project" value="BHF-UCL"/>
</dbReference>
<dbReference type="GO" id="GO:0002606">
    <property type="term" value="P:positive regulation of dendritic cell antigen processing and presentation"/>
    <property type="evidence" value="ECO:0000250"/>
    <property type="project" value="BHF-UCL"/>
</dbReference>
<dbReference type="GO" id="GO:0010628">
    <property type="term" value="P:positive regulation of gene expression"/>
    <property type="evidence" value="ECO:0000250"/>
    <property type="project" value="BHF-UCL"/>
</dbReference>
<dbReference type="GO" id="GO:0050766">
    <property type="term" value="P:positive regulation of phagocytosis"/>
    <property type="evidence" value="ECO:0000250"/>
    <property type="project" value="BHF-UCL"/>
</dbReference>
<dbReference type="GO" id="GO:0002827">
    <property type="term" value="P:positive regulation of T-helper 1 type immune response"/>
    <property type="evidence" value="ECO:0000250"/>
    <property type="project" value="BHF-UCL"/>
</dbReference>
<dbReference type="GO" id="GO:0045944">
    <property type="term" value="P:positive regulation of transcription by RNA polymerase II"/>
    <property type="evidence" value="ECO:0000250"/>
    <property type="project" value="BHF-UCL"/>
</dbReference>
<dbReference type="GO" id="GO:0032729">
    <property type="term" value="P:positive regulation of type II interferon production"/>
    <property type="evidence" value="ECO:0000250"/>
    <property type="project" value="ARUK-UCL"/>
</dbReference>
<dbReference type="GO" id="GO:0045730">
    <property type="term" value="P:respiratory burst"/>
    <property type="evidence" value="ECO:0000250"/>
    <property type="project" value="BHF-UCL"/>
</dbReference>
<dbReference type="GO" id="GO:0009617">
    <property type="term" value="P:response to bacterium"/>
    <property type="evidence" value="ECO:0000314"/>
    <property type="project" value="UniProtKB"/>
</dbReference>
<dbReference type="GO" id="GO:0032496">
    <property type="term" value="P:response to lipopolysaccharide"/>
    <property type="evidence" value="ECO:0000250"/>
    <property type="project" value="BHF-UCL"/>
</dbReference>
<dbReference type="GO" id="GO:0034341">
    <property type="term" value="P:response to type II interferon"/>
    <property type="evidence" value="ECO:0000250"/>
    <property type="project" value="BHF-UCL"/>
</dbReference>
<dbReference type="GO" id="GO:0002309">
    <property type="term" value="P:T cell proliferation involved in immune response"/>
    <property type="evidence" value="ECO:0000250"/>
    <property type="project" value="BHF-UCL"/>
</dbReference>
<dbReference type="GO" id="GO:0007035">
    <property type="term" value="P:vacuolar acidification"/>
    <property type="evidence" value="ECO:0000250"/>
    <property type="project" value="BHF-UCL"/>
</dbReference>
<dbReference type="GO" id="GO:0042060">
    <property type="term" value="P:wound healing"/>
    <property type="evidence" value="ECO:0000250"/>
    <property type="project" value="BHF-UCL"/>
</dbReference>
<dbReference type="HAMAP" id="MF_00221">
    <property type="entry name" value="NRAMP"/>
    <property type="match status" value="1"/>
</dbReference>
<dbReference type="InterPro" id="IPR001046">
    <property type="entry name" value="NRAMP_fam"/>
</dbReference>
<dbReference type="NCBIfam" id="TIGR01197">
    <property type="entry name" value="nramp"/>
    <property type="match status" value="1"/>
</dbReference>
<dbReference type="NCBIfam" id="NF037982">
    <property type="entry name" value="Nramp_1"/>
    <property type="match status" value="1"/>
</dbReference>
<dbReference type="PANTHER" id="PTHR11706:SF52">
    <property type="entry name" value="NATURAL RESISTANCE-ASSOCIATED MACROPHAGE PROTEIN 1"/>
    <property type="match status" value="1"/>
</dbReference>
<dbReference type="PANTHER" id="PTHR11706">
    <property type="entry name" value="SOLUTE CARRIER PROTEIN FAMILY 11 MEMBER"/>
    <property type="match status" value="1"/>
</dbReference>
<dbReference type="Pfam" id="PF01566">
    <property type="entry name" value="Nramp"/>
    <property type="match status" value="1"/>
</dbReference>
<dbReference type="PRINTS" id="PR00447">
    <property type="entry name" value="NATRESASSCMP"/>
</dbReference>
<name>NRAM1_HUMAN</name>
<accession>P49279</accession>
<accession>C0H5Y3</accession>
<sequence>MTGDKGPQRLSGSSYGSISSPTSPTSPGPQQAPPRETYLSEKIPIPDTKPGTFSLRKLWAFTGPGFLMSIAFLDPGNIESDLQAGAVAGFKLLWVLLWATVLGLLCQRLAARLGVVTGKDLGEVCHLYYPKVPRTVLWLTIELAIVGSDMQEVIGTAIAFNLLSAGRIPLWGGVLITIVDTFFFLFLDNYGLRKLEAFFGLLITIMALTFGYEYVVARPEQGALLRGLFLPSCPGCGHPELLQAVGIVGAIIMPHNIYLHSALVKSREIDRARRADIREANMYFLIEATIALSVSFIINLFVMAVFGQAFYQKTNQAAFNICANSSLHDYAKIFPMNNATVAVDIYQGGVILGCLFGPAALYIWAIGLLAAGQSSTMTGTYAGQFVMEGFLRLRWSRFARVLLTRSCAILPTVLVAVFRDLRDLSGLNDLLNVLQSLLLPFAVLPILTFTSMPTLMQEFANGLLNKVVTSSIMVLVCAINLYFVVSYLPSLPHPAYFGLAALLAAAYLGLSTYLVWTCCLAHGATFLAHSSHHHFLYGLLEEDQKGETSG</sequence>
<comment type="function">
    <text evidence="3 13 14">Macrophage-specific antiporter that fluxes metal ions in either direction against a proton gradient. Localized to late endosomal lysosomal membranes, delivers bivalent cations from the cytosol into these acidic compartments where they may directly affect antimicrobial activity (PubMed:11237855). Involved in iron metabolism and host natural resistance to infection with intracellular parasites. Pathogen resistance involves sequestration of Fe(2+) and Mn(2+), cofactors of both prokaryotic and eukaryotic catalases and superoxide dismutases, not only to protect the macrophage against its own generation of reactive oxygen species, but to deny the cations to the pathogen for synthesis of its protective enzymes (Probable).</text>
</comment>
<comment type="catalytic activity">
    <reaction evidence="3">
        <text>Zn(2+)(in) + H(+)(out) = Zn(2+)(out) + H(+)(in)</text>
        <dbReference type="Rhea" id="RHEA:28839"/>
        <dbReference type="ChEBI" id="CHEBI:15378"/>
        <dbReference type="ChEBI" id="CHEBI:29105"/>
    </reaction>
</comment>
<comment type="catalytic activity">
    <reaction evidence="3">
        <text>Fe(2+)(in) + H(+)(out) = Fe(2+)(out) + H(+)(in)</text>
        <dbReference type="Rhea" id="RHEA:29439"/>
        <dbReference type="ChEBI" id="CHEBI:15378"/>
        <dbReference type="ChEBI" id="CHEBI:29033"/>
    </reaction>
</comment>
<comment type="catalytic activity">
    <reaction evidence="3">
        <text>Mn(2+)(in) + H(+)(out) = Mn(2+)(out) + H(+)(in)</text>
        <dbReference type="Rhea" id="RHEA:73063"/>
        <dbReference type="ChEBI" id="CHEBI:15378"/>
        <dbReference type="ChEBI" id="CHEBI:29035"/>
    </reaction>
</comment>
<comment type="subcellular location">
    <subcellularLocation>
        <location evidence="12">Late endosome membrane</location>
        <topology evidence="1">Multi-pass membrane protein</topology>
    </subcellularLocation>
    <subcellularLocation>
        <location evidence="12">Lysosome membrane</location>
        <topology evidence="1">Multi-pass membrane protein</topology>
    </subcellularLocation>
</comment>
<comment type="alternative products">
    <event type="alternative splicing"/>
    <isoform>
        <id>P49279-1</id>
        <name>1</name>
        <sequence type="displayed"/>
    </isoform>
    <isoform>
        <id>P49279-2</id>
        <name>2</name>
        <sequence type="described" ref="VSP_047875 VSP_047876"/>
    </isoform>
</comment>
<comment type="tissue specificity">
    <text evidence="7 8">Macrophages; peripheral blood leukocytes, lung, spleen and liver.</text>
</comment>
<comment type="induction">
    <text>In response to lymphokine or bacterial products.</text>
</comment>
<comment type="polymorphism">
    <text evidence="5">Genetic variation in SLC11A1 is associated with susceptibility to infection with Mycobacterium ulcerans [MIM:610446].</text>
</comment>
<comment type="polymorphism">
    <text evidence="4">Genetic variations in SLC11A1 determine Mycobacterium tuberculosis susceptibility [MIM:607948].</text>
</comment>
<comment type="similarity">
    <text evidence="11">Belongs to the NRAMP family.</text>
</comment>
<proteinExistence type="evidence at protein level"/>
<gene>
    <name evidence="15" type="primary">SLC11A1</name>
    <name type="synonym">LSH</name>
    <name type="synonym">NRAMP</name>
    <name evidence="9" type="synonym">NRAMP1</name>
</gene>
<evidence type="ECO:0000255" key="1"/>
<evidence type="ECO:0000256" key="2">
    <source>
        <dbReference type="SAM" id="MobiDB-lite"/>
    </source>
</evidence>
<evidence type="ECO:0000269" key="3">
    <source>
    </source>
</evidence>
<evidence type="ECO:0000269" key="4">
    <source>
    </source>
</evidence>
<evidence type="ECO:0000269" key="5">
    <source>
    </source>
</evidence>
<evidence type="ECO:0000269" key="6">
    <source>
    </source>
</evidence>
<evidence type="ECO:0000269" key="7">
    <source>
    </source>
</evidence>
<evidence type="ECO:0000269" key="8">
    <source>
    </source>
</evidence>
<evidence type="ECO:0000303" key="9">
    <source>
    </source>
</evidence>
<evidence type="ECO:0000303" key="10">
    <source>
    </source>
</evidence>
<evidence type="ECO:0000305" key="11"/>
<evidence type="ECO:0000305" key="12">
    <source>
    </source>
</evidence>
<evidence type="ECO:0000305" key="13">
    <source>
    </source>
</evidence>
<evidence type="ECO:0000305" key="14">
    <source>
    </source>
</evidence>
<evidence type="ECO:0000312" key="15">
    <source>
        <dbReference type="HGNC" id="HGNC:10907"/>
    </source>
</evidence>